<feature type="chain" id="PRO_0000289255" description="Cholinephosphotransferase 1">
    <location>
        <begin position="1"/>
        <end position="335"/>
    </location>
</feature>
<feature type="transmembrane region" description="Helical" evidence="1">
    <location>
        <begin position="53"/>
        <end position="73"/>
    </location>
</feature>
<feature type="transmembrane region" description="Helical" evidence="1">
    <location>
        <begin position="84"/>
        <end position="108"/>
    </location>
</feature>
<feature type="transmembrane region" description="Helical" evidence="1">
    <location>
        <begin position="116"/>
        <end position="140"/>
    </location>
</feature>
<feature type="transmembrane region" description="Helical" evidence="1">
    <location>
        <begin position="151"/>
        <end position="169"/>
    </location>
</feature>
<feature type="transmembrane region" description="Helical" evidence="1">
    <location>
        <begin position="181"/>
        <end position="197"/>
    </location>
</feature>
<feature type="transmembrane region" description="Helical" evidence="1">
    <location>
        <begin position="213"/>
        <end position="238"/>
    </location>
</feature>
<feature type="transmembrane region" description="Helical" evidence="1">
    <location>
        <begin position="267"/>
        <end position="276"/>
    </location>
</feature>
<feature type="transmembrane region" description="Helical" evidence="1">
    <location>
        <begin position="284"/>
        <end position="313"/>
    </location>
</feature>
<feature type="active site" description="Proton acceptor" evidence="1">
    <location>
        <position position="123"/>
    </location>
</feature>
<feature type="binding site" evidence="1">
    <location>
        <position position="54"/>
    </location>
    <ligand>
        <name>CDP-choline</name>
        <dbReference type="ChEBI" id="CHEBI:58779"/>
    </ligand>
</feature>
<feature type="binding site" evidence="1">
    <location>
        <position position="101"/>
    </location>
    <ligand>
        <name>Mg(2+)</name>
        <dbReference type="ChEBI" id="CHEBI:18420"/>
        <label>1</label>
    </ligand>
</feature>
<feature type="binding site" evidence="1">
    <location>
        <position position="101"/>
    </location>
    <ligand>
        <name>Mg(2+)</name>
        <dbReference type="ChEBI" id="CHEBI:18420"/>
        <label>2</label>
    </ligand>
</feature>
<feature type="binding site" evidence="1">
    <location>
        <position position="104"/>
    </location>
    <ligand>
        <name>Mg(2+)</name>
        <dbReference type="ChEBI" id="CHEBI:18420"/>
        <label>1</label>
    </ligand>
</feature>
<feature type="binding site" evidence="1">
    <location>
        <position position="109"/>
    </location>
    <ligand>
        <name>CDP-choline</name>
        <dbReference type="ChEBI" id="CHEBI:58779"/>
    </ligand>
</feature>
<feature type="binding site" evidence="1">
    <location>
        <position position="122"/>
    </location>
    <ligand>
        <name>Mg(2+)</name>
        <dbReference type="ChEBI" id="CHEBI:18420"/>
        <label>1</label>
    </ligand>
</feature>
<feature type="binding site" evidence="1">
    <location>
        <position position="122"/>
    </location>
    <ligand>
        <name>Mg(2+)</name>
        <dbReference type="ChEBI" id="CHEBI:18420"/>
        <label>2</label>
    </ligand>
</feature>
<feature type="binding site" evidence="1">
    <location>
        <position position="126"/>
    </location>
    <ligand>
        <name>Mg(2+)</name>
        <dbReference type="ChEBI" id="CHEBI:18420"/>
        <label>2</label>
    </ligand>
</feature>
<feature type="site" description="Increases basicity of active site His" evidence="1">
    <location>
        <position position="119"/>
    </location>
</feature>
<comment type="function">
    <text evidence="2">Catalyzes the final step of de novo phosphatidylcholine (PC) synthesis, i.e. the transfer of choline phosphate from CDP-choline to the free hydroxyl of a diacylglycerol (DAG), producing a PC. It thereby plays a central role in the formation and maintenance of vesicular membranes.</text>
</comment>
<comment type="catalytic activity">
    <reaction evidence="2">
        <text>CDP-choline + a 1,2-diacyl-sn-glycerol = a 1,2-diacyl-sn-glycero-3-phosphocholine + CMP + H(+)</text>
        <dbReference type="Rhea" id="RHEA:32939"/>
        <dbReference type="ChEBI" id="CHEBI:15378"/>
        <dbReference type="ChEBI" id="CHEBI:17815"/>
        <dbReference type="ChEBI" id="CHEBI:57643"/>
        <dbReference type="ChEBI" id="CHEBI:58779"/>
        <dbReference type="ChEBI" id="CHEBI:60377"/>
        <dbReference type="EC" id="2.7.8.2"/>
    </reaction>
    <physiologicalReaction direction="left-to-right" evidence="2">
        <dbReference type="Rhea" id="RHEA:32940"/>
    </physiologicalReaction>
</comment>
<comment type="catalytic activity">
    <reaction evidence="2">
        <text>1-octadecanoyl-2-(5Z,8Z,11Z,14Z-eicosatetraenoyl)-sn-glycerol + CDP-choline = 1-octadecanoyl-2-(5Z,8Z,11Z,14Z-eicosatetraenoyl)-sn-glycero-3-phosphocholine + CMP + H(+)</text>
        <dbReference type="Rhea" id="RHEA:54344"/>
        <dbReference type="ChEBI" id="CHEBI:15378"/>
        <dbReference type="ChEBI" id="CHEBI:58779"/>
        <dbReference type="ChEBI" id="CHEBI:60377"/>
        <dbReference type="ChEBI" id="CHEBI:74965"/>
        <dbReference type="ChEBI" id="CHEBI:75728"/>
    </reaction>
    <physiologicalReaction direction="left-to-right" evidence="2">
        <dbReference type="Rhea" id="RHEA:54345"/>
    </physiologicalReaction>
</comment>
<comment type="catalytic activity">
    <reaction evidence="2">
        <text>1-hexadecanoyl-2-(9Z-octadecenoyl)-sn-glycerol + CDP-choline = 1-hexadecanoyl-2-(9Z-octadecenoyl)-sn-glycero-3-phosphocholine + CMP + H(+)</text>
        <dbReference type="Rhea" id="RHEA:54244"/>
        <dbReference type="ChEBI" id="CHEBI:15378"/>
        <dbReference type="ChEBI" id="CHEBI:58779"/>
        <dbReference type="ChEBI" id="CHEBI:60377"/>
        <dbReference type="ChEBI" id="CHEBI:73001"/>
        <dbReference type="ChEBI" id="CHEBI:75466"/>
    </reaction>
    <physiologicalReaction direction="left-to-right" evidence="2">
        <dbReference type="Rhea" id="RHEA:54245"/>
    </physiologicalReaction>
</comment>
<comment type="catalytic activity">
    <reaction evidence="2">
        <text>1-hexadecanoyl-2-(4Z,7Z,10Z,13Z,16Z,19Z-docosahexaenoyl)-sn-glycerol + CDP-choline = 1-hexadecanoyl-2-(4Z,7Z,10Z,13Z,16Z,19Z-docosahexaenoyl)-sn-glycero-3-phosphocholine + CMP + H(+)</text>
        <dbReference type="Rhea" id="RHEA:54332"/>
        <dbReference type="ChEBI" id="CHEBI:15378"/>
        <dbReference type="ChEBI" id="CHEBI:58779"/>
        <dbReference type="ChEBI" id="CHEBI:60377"/>
        <dbReference type="ChEBI" id="CHEBI:74963"/>
        <dbReference type="ChEBI" id="CHEBI:82949"/>
    </reaction>
    <physiologicalReaction direction="left-to-right" evidence="2">
        <dbReference type="Rhea" id="RHEA:54333"/>
    </physiologicalReaction>
</comment>
<comment type="catalytic activity">
    <reaction evidence="1">
        <text>1,2-dioctanoyl-sn-glycerol + CDP-choline = 1,2-dioctanoyl-sn-glycero-3-phosphocholine + CMP + H(+)</text>
        <dbReference type="Rhea" id="RHEA:54232"/>
        <dbReference type="ChEBI" id="CHEBI:15378"/>
        <dbReference type="ChEBI" id="CHEBI:58779"/>
        <dbReference type="ChEBI" id="CHEBI:60377"/>
        <dbReference type="ChEBI" id="CHEBI:76979"/>
        <dbReference type="ChEBI" id="CHEBI:78228"/>
    </reaction>
    <physiologicalReaction direction="left-to-right" evidence="1">
        <dbReference type="Rhea" id="RHEA:54233"/>
    </physiologicalReaction>
</comment>
<comment type="cofactor">
    <cofactor evidence="2">
        <name>Mg(2+)</name>
        <dbReference type="ChEBI" id="CHEBI:18420"/>
    </cofactor>
    <cofactor evidence="2">
        <name>Mn(2+)</name>
        <dbReference type="ChEBI" id="CHEBI:29035"/>
    </cofactor>
</comment>
<comment type="pathway">
    <text evidence="2">Phospholipid metabolism; phosphatidylcholine biosynthesis; phosphatidylcholine from phosphocholine: step 2/2.</text>
</comment>
<comment type="subcellular location">
    <subcellularLocation>
        <location evidence="2">Golgi apparatus membrane</location>
        <topology evidence="2">Multi-pass membrane protein</topology>
    </subcellularLocation>
</comment>
<comment type="similarity">
    <text evidence="3">Belongs to the CDP-alcohol phosphatidyltransferase class-I family.</text>
</comment>
<organism>
    <name type="scientific">Gallus gallus</name>
    <name type="common">Chicken</name>
    <dbReference type="NCBI Taxonomy" id="9031"/>
    <lineage>
        <taxon>Eukaryota</taxon>
        <taxon>Metazoa</taxon>
        <taxon>Chordata</taxon>
        <taxon>Craniata</taxon>
        <taxon>Vertebrata</taxon>
        <taxon>Euteleostomi</taxon>
        <taxon>Archelosauria</taxon>
        <taxon>Archosauria</taxon>
        <taxon>Dinosauria</taxon>
        <taxon>Saurischia</taxon>
        <taxon>Theropoda</taxon>
        <taxon>Coelurosauria</taxon>
        <taxon>Aves</taxon>
        <taxon>Neognathae</taxon>
        <taxon>Galloanserae</taxon>
        <taxon>Galliformes</taxon>
        <taxon>Phasianidae</taxon>
        <taxon>Phasianinae</taxon>
        <taxon>Gallus</taxon>
    </lineage>
</organism>
<keyword id="KW-0333">Golgi apparatus</keyword>
<keyword id="KW-0444">Lipid biosynthesis</keyword>
<keyword id="KW-0443">Lipid metabolism</keyword>
<keyword id="KW-0460">Magnesium</keyword>
<keyword id="KW-0464">Manganese</keyword>
<keyword id="KW-0472">Membrane</keyword>
<keyword id="KW-0479">Metal-binding</keyword>
<keyword id="KW-0594">Phospholipid biosynthesis</keyword>
<keyword id="KW-1208">Phospholipid metabolism</keyword>
<keyword id="KW-1185">Reference proteome</keyword>
<keyword id="KW-0808">Transferase</keyword>
<keyword id="KW-0812">Transmembrane</keyword>
<keyword id="KW-1133">Transmembrane helix</keyword>
<accession>Q5ZHQ5</accession>
<protein>
    <recommendedName>
        <fullName>Cholinephosphotransferase 1</fullName>
        <ecNumber>2.7.8.2</ecNumber>
    </recommendedName>
    <alternativeName>
        <fullName>Diacylglycerol cholinephosphotransferase 1</fullName>
    </alternativeName>
</protein>
<dbReference type="EC" id="2.7.8.2"/>
<dbReference type="EMBL" id="AJ721079">
    <property type="protein sequence ID" value="CAG32738.1"/>
    <property type="molecule type" value="mRNA"/>
</dbReference>
<dbReference type="RefSeq" id="NP_001025935.1">
    <property type="nucleotide sequence ID" value="NM_001030764.2"/>
</dbReference>
<dbReference type="SMR" id="Q5ZHQ5"/>
<dbReference type="FunCoup" id="Q5ZHQ5">
    <property type="interactions" value="108"/>
</dbReference>
<dbReference type="STRING" id="9031.ENSGALP00000052929"/>
<dbReference type="Ensembl" id="ENSGALT00010027497.1">
    <property type="protein sequence ID" value="ENSGALP00010015743.1"/>
    <property type="gene ID" value="ENSGALG00010011484.1"/>
</dbReference>
<dbReference type="GeneID" id="418098"/>
<dbReference type="KEGG" id="gga:418098"/>
<dbReference type="CTD" id="56994"/>
<dbReference type="VEuPathDB" id="HostDB:geneid_418098"/>
<dbReference type="GeneTree" id="ENSGT00950000183117"/>
<dbReference type="HOGENOM" id="CLU_035066_1_0_1"/>
<dbReference type="InParanoid" id="Q5ZHQ5"/>
<dbReference type="OrthoDB" id="196717at2759"/>
<dbReference type="PhylomeDB" id="Q5ZHQ5"/>
<dbReference type="TreeFam" id="TF313270"/>
<dbReference type="Reactome" id="R-GGA-1483191">
    <property type="pathway name" value="Synthesis of PC"/>
</dbReference>
<dbReference type="UniPathway" id="UPA00753">
    <property type="reaction ID" value="UER00740"/>
</dbReference>
<dbReference type="PRO" id="PR:Q5ZHQ5"/>
<dbReference type="Proteomes" id="UP000000539">
    <property type="component" value="Chromosome 1"/>
</dbReference>
<dbReference type="Bgee" id="ENSGALG00000012769">
    <property type="expression patterns" value="Expressed in spermatocyte and 12 other cell types or tissues"/>
</dbReference>
<dbReference type="GO" id="GO:0005789">
    <property type="term" value="C:endoplasmic reticulum membrane"/>
    <property type="evidence" value="ECO:0000318"/>
    <property type="project" value="GO_Central"/>
</dbReference>
<dbReference type="GO" id="GO:0005794">
    <property type="term" value="C:Golgi apparatus"/>
    <property type="evidence" value="ECO:0000318"/>
    <property type="project" value="GO_Central"/>
</dbReference>
<dbReference type="GO" id="GO:0000139">
    <property type="term" value="C:Golgi membrane"/>
    <property type="evidence" value="ECO:0007669"/>
    <property type="project" value="UniProtKB-SubCell"/>
</dbReference>
<dbReference type="GO" id="GO:0004142">
    <property type="term" value="F:diacylglycerol cholinephosphotransferase activity"/>
    <property type="evidence" value="ECO:0000318"/>
    <property type="project" value="GO_Central"/>
</dbReference>
<dbReference type="GO" id="GO:0046872">
    <property type="term" value="F:metal ion binding"/>
    <property type="evidence" value="ECO:0007669"/>
    <property type="project" value="UniProtKB-KW"/>
</dbReference>
<dbReference type="FunFam" id="1.20.120.1760:FF:000002">
    <property type="entry name" value="Choline/ethanolamine phosphotransferase 1"/>
    <property type="match status" value="1"/>
</dbReference>
<dbReference type="Gene3D" id="1.20.120.1760">
    <property type="match status" value="1"/>
</dbReference>
<dbReference type="InterPro" id="IPR000462">
    <property type="entry name" value="CDP-OH_P_trans"/>
</dbReference>
<dbReference type="InterPro" id="IPR043130">
    <property type="entry name" value="CDP-OH_PTrfase_TM_dom"/>
</dbReference>
<dbReference type="InterPro" id="IPR048254">
    <property type="entry name" value="CDP_ALCOHOL_P_TRANSF_CS"/>
</dbReference>
<dbReference type="InterPro" id="IPR014472">
    <property type="entry name" value="CHOPT"/>
</dbReference>
<dbReference type="PANTHER" id="PTHR10414:SF32">
    <property type="entry name" value="CHOLINEPHOSPHOTRANSFERASE 1"/>
    <property type="match status" value="1"/>
</dbReference>
<dbReference type="PANTHER" id="PTHR10414">
    <property type="entry name" value="ETHANOLAMINEPHOSPHOTRANSFERASE"/>
    <property type="match status" value="1"/>
</dbReference>
<dbReference type="Pfam" id="PF01066">
    <property type="entry name" value="CDP-OH_P_transf"/>
    <property type="match status" value="1"/>
</dbReference>
<dbReference type="PROSITE" id="PS00379">
    <property type="entry name" value="CDP_ALCOHOL_P_TRANSF"/>
    <property type="match status" value="1"/>
</dbReference>
<gene>
    <name type="primary">CHPT1</name>
    <name type="ORF">RCJMB04_34i2</name>
</gene>
<evidence type="ECO:0000250" key="1">
    <source>
        <dbReference type="UniProtKB" id="Q4KLV1"/>
    </source>
</evidence>
<evidence type="ECO:0000250" key="2">
    <source>
        <dbReference type="UniProtKB" id="Q8WUD6"/>
    </source>
</evidence>
<evidence type="ECO:0000305" key="3"/>
<proteinExistence type="evidence at transcript level"/>
<sequence length="335" mass="37091">MAAPWVLPAPLSPAQLKRLEQHRYSSAGRSLLEPWLQPYWGWLVERLPPWLAPNAITLGGLLLNCLTALPLIASCPTATEQAPFWAYILGALGLFIYQSLDAIDGKQARRTNSSSPLGELFDHGCDSISTVFVVLGSCIAIRLGTNPDWLFFCCFVGLFMFYSAHWQTYVSGILRFGKVDVTEVQIAITMLLLVSAFCGTAVWDYKVHLVGLELKFFAVVGILCGTAVSCFNYFRIIFGGGVGKNGSTIAVAHMTKSEISLQDTAFIGPGLLFLDQYFNSFIDEYVVLWIALFISLFDMLRYATGVCLQIAAHLHIHVFRISSHQAPEQVQNHND</sequence>
<name>CHPT1_CHICK</name>
<reference key="1">
    <citation type="journal article" date="2005" name="Genome Biol.">
        <title>Full-length cDNAs from chicken bursal lymphocytes to facilitate gene function analysis.</title>
        <authorList>
            <person name="Caldwell R.B."/>
            <person name="Kierzek A.M."/>
            <person name="Arakawa H."/>
            <person name="Bezzubov Y."/>
            <person name="Zaim J."/>
            <person name="Fiedler P."/>
            <person name="Kutter S."/>
            <person name="Blagodatski A."/>
            <person name="Kostovska D."/>
            <person name="Koter M."/>
            <person name="Plachy J."/>
            <person name="Carninci P."/>
            <person name="Hayashizaki Y."/>
            <person name="Buerstedde J.-M."/>
        </authorList>
    </citation>
    <scope>NUCLEOTIDE SEQUENCE [LARGE SCALE MRNA]</scope>
    <source>
        <strain>CB</strain>
        <tissue>Bursa of Fabricius</tissue>
    </source>
</reference>